<sequence length="727" mass="80180">MNHSPLKTALAYECFQDQDNSTLALPSDQKMKTGTSGRQRVQEQVMMTVKRQKSKSSQSSTLSHSNRGSMYDGLADSYNNYGTSSRSSFYSKFQAGSGSWGYPIYNGTLKREADNRRFSSYSQMESWGRQYPRGGCTAAGAGSDICFMQKIKASRSEPDLYCDPRGTLRKGTLGGKGHKTTQNRYSFYSTCSGQKAVKKYPGRPPSCTSRQDPVCVPPTSCTKDLSFSHSRASSKICSEDIECSGLTIPKAVQYLSSQDEKCQAIGAYYIQHTCFQDESAKQQVYQLGGICKLVDLLRSPNQNVQQAAAGALRNLVFRSTTNKLETRRQNGIREAVSLLRRTGSTEIQKQLTGLLWNLSSTDELKEELIAEALPVLADRVIIPFSGWCDGNSNLSREPVDPEVFFNATGCLRNLSSADVGRQTMRNYTGLIDSLMAYVQNCVAANRCDDKSVENCMCVLHNLSYRLDAEVPTRYRQLEYNARNAYTDKSSTGCFSNKSDRMTNNNYDCPLPEEEPNPKGSSWLYHSDAVRTYLNLMGKSKKDATLEACAGALQNLTASKGLMSSGMSQLIGLKEKGLPHIARLLQSGNSDVVRSGASLLSNMSRHPALHRVMGTQVFPEVTRLLTSHTGNTSNSEDILASACYTVRNLMASLPGMAKQHFSSSMVNNIINLCRSSTSPKAAEAARLLLSDMWSSRELQGLLRQQGFDRSMLGTLAGANSLRNFTSRF</sequence>
<protein>
    <recommendedName>
        <fullName>Plakophilin-1</fullName>
    </recommendedName>
    <alternativeName>
        <fullName>Band-6 protein</fullName>
        <shortName>B6P</shortName>
    </alternativeName>
</protein>
<dbReference type="EMBL" id="Z37975">
    <property type="protein sequence ID" value="CAA86029.1"/>
    <property type="molecule type" value="mRNA"/>
</dbReference>
<dbReference type="RefSeq" id="NP_776570.1">
    <property type="nucleotide sequence ID" value="NM_174145.2"/>
</dbReference>
<dbReference type="SMR" id="Q28161"/>
<dbReference type="FunCoup" id="Q28161">
    <property type="interactions" value="81"/>
</dbReference>
<dbReference type="STRING" id="9913.ENSBTAP00000055583"/>
<dbReference type="PeptideAtlas" id="Q28161"/>
<dbReference type="GeneID" id="281405"/>
<dbReference type="KEGG" id="bta:281405"/>
<dbReference type="CTD" id="5317"/>
<dbReference type="InParanoid" id="Q28161"/>
<dbReference type="OrthoDB" id="3245100at2759"/>
<dbReference type="Proteomes" id="UP000009136">
    <property type="component" value="Unplaced"/>
</dbReference>
<dbReference type="GO" id="GO:0005912">
    <property type="term" value="C:adherens junction"/>
    <property type="evidence" value="ECO:0000318"/>
    <property type="project" value="GO_Central"/>
</dbReference>
<dbReference type="GO" id="GO:0005737">
    <property type="term" value="C:cytoplasm"/>
    <property type="evidence" value="ECO:0000250"/>
    <property type="project" value="UniProtKB"/>
</dbReference>
<dbReference type="GO" id="GO:0010494">
    <property type="term" value="C:cytoplasmic stress granule"/>
    <property type="evidence" value="ECO:0007669"/>
    <property type="project" value="UniProtKB-SubCell"/>
</dbReference>
<dbReference type="GO" id="GO:0030057">
    <property type="term" value="C:desmosome"/>
    <property type="evidence" value="ECO:0000250"/>
    <property type="project" value="UniProtKB"/>
</dbReference>
<dbReference type="GO" id="GO:0097165">
    <property type="term" value="C:nuclear stress granule"/>
    <property type="evidence" value="ECO:0000250"/>
    <property type="project" value="UniProtKB"/>
</dbReference>
<dbReference type="GO" id="GO:0005634">
    <property type="term" value="C:nucleus"/>
    <property type="evidence" value="ECO:0000250"/>
    <property type="project" value="UniProtKB"/>
</dbReference>
<dbReference type="GO" id="GO:0048471">
    <property type="term" value="C:perinuclear region of cytoplasm"/>
    <property type="evidence" value="ECO:0000250"/>
    <property type="project" value="UniProtKB"/>
</dbReference>
<dbReference type="GO" id="GO:0005886">
    <property type="term" value="C:plasma membrane"/>
    <property type="evidence" value="ECO:0000250"/>
    <property type="project" value="UniProtKB"/>
</dbReference>
<dbReference type="GO" id="GO:0045296">
    <property type="term" value="F:cadherin binding"/>
    <property type="evidence" value="ECO:0000318"/>
    <property type="project" value="GO_Central"/>
</dbReference>
<dbReference type="GO" id="GO:0003677">
    <property type="term" value="F:DNA binding"/>
    <property type="evidence" value="ECO:0000250"/>
    <property type="project" value="UniProtKB"/>
</dbReference>
<dbReference type="GO" id="GO:0003723">
    <property type="term" value="F:RNA binding"/>
    <property type="evidence" value="ECO:0007669"/>
    <property type="project" value="UniProtKB-KW"/>
</dbReference>
<dbReference type="GO" id="GO:0036305">
    <property type="term" value="P:ameloblast differentiation"/>
    <property type="evidence" value="ECO:0000250"/>
    <property type="project" value="UniProtKB"/>
</dbReference>
<dbReference type="GO" id="GO:0098609">
    <property type="term" value="P:cell-cell adhesion"/>
    <property type="evidence" value="ECO:0000318"/>
    <property type="project" value="GO_Central"/>
</dbReference>
<dbReference type="GO" id="GO:0002159">
    <property type="term" value="P:desmosome assembly"/>
    <property type="evidence" value="ECO:0000250"/>
    <property type="project" value="UniProtKB"/>
</dbReference>
<dbReference type="GO" id="GO:1903676">
    <property type="term" value="P:positive regulation of cap-dependent translational initiation"/>
    <property type="evidence" value="ECO:0000250"/>
    <property type="project" value="UniProtKB"/>
</dbReference>
<dbReference type="GO" id="GO:0022409">
    <property type="term" value="P:positive regulation of cell-cell adhesion"/>
    <property type="evidence" value="ECO:0000250"/>
    <property type="project" value="UniProtKB"/>
</dbReference>
<dbReference type="GO" id="GO:0045618">
    <property type="term" value="P:positive regulation of keratinocyte differentiation"/>
    <property type="evidence" value="ECO:0000250"/>
    <property type="project" value="UniProtKB"/>
</dbReference>
<dbReference type="GO" id="GO:1903078">
    <property type="term" value="P:positive regulation of protein localization to plasma membrane"/>
    <property type="evidence" value="ECO:0000250"/>
    <property type="project" value="UniProtKB"/>
</dbReference>
<dbReference type="GO" id="GO:0045944">
    <property type="term" value="P:positive regulation of transcription by RNA polymerase II"/>
    <property type="evidence" value="ECO:0000250"/>
    <property type="project" value="UniProtKB"/>
</dbReference>
<dbReference type="FunFam" id="1.25.10.10:FF:000135">
    <property type="entry name" value="Plakophilin 1"/>
    <property type="match status" value="1"/>
</dbReference>
<dbReference type="Gene3D" id="1.25.10.10">
    <property type="entry name" value="Leucine-rich Repeat Variant"/>
    <property type="match status" value="1"/>
</dbReference>
<dbReference type="InterPro" id="IPR011989">
    <property type="entry name" value="ARM-like"/>
</dbReference>
<dbReference type="InterPro" id="IPR016024">
    <property type="entry name" value="ARM-type_fold"/>
</dbReference>
<dbReference type="InterPro" id="IPR000225">
    <property type="entry name" value="Armadillo"/>
</dbReference>
<dbReference type="InterPro" id="IPR028435">
    <property type="entry name" value="Plakophilin/d_Catenin"/>
</dbReference>
<dbReference type="PANTHER" id="PTHR10372:SF3">
    <property type="entry name" value="PLAKOPHILIN-1"/>
    <property type="match status" value="1"/>
</dbReference>
<dbReference type="PANTHER" id="PTHR10372">
    <property type="entry name" value="PLAKOPHILLIN-RELATED"/>
    <property type="match status" value="1"/>
</dbReference>
<dbReference type="Pfam" id="PF00514">
    <property type="entry name" value="Arm"/>
    <property type="match status" value="2"/>
</dbReference>
<dbReference type="SMART" id="SM00185">
    <property type="entry name" value="ARM"/>
    <property type="match status" value="7"/>
</dbReference>
<dbReference type="SUPFAM" id="SSF48371">
    <property type="entry name" value="ARM repeat"/>
    <property type="match status" value="1"/>
</dbReference>
<dbReference type="PROSITE" id="PS50176">
    <property type="entry name" value="ARM_REPEAT"/>
    <property type="match status" value="3"/>
</dbReference>
<name>PKP1_BOVIN</name>
<evidence type="ECO:0000250" key="1">
    <source>
        <dbReference type="UniProtKB" id="P97350"/>
    </source>
</evidence>
<evidence type="ECO:0000250" key="2">
    <source>
        <dbReference type="UniProtKB" id="Q13835"/>
    </source>
</evidence>
<evidence type="ECO:0000256" key="3">
    <source>
        <dbReference type="SAM" id="MobiDB-lite"/>
    </source>
</evidence>
<evidence type="ECO:0000305" key="4"/>
<feature type="chain" id="PRO_0000064283" description="Plakophilin-1">
    <location>
        <begin position="1"/>
        <end position="727"/>
    </location>
</feature>
<feature type="repeat" description="ARM 1">
    <location>
        <begin position="244"/>
        <end position="275"/>
    </location>
</feature>
<feature type="repeat" description="ARM 2">
    <location>
        <begin position="276"/>
        <end position="317"/>
    </location>
</feature>
<feature type="repeat" description="ARM 3">
    <location>
        <begin position="318"/>
        <end position="360"/>
    </location>
</feature>
<feature type="repeat" description="ARM 4">
    <location>
        <begin position="361"/>
        <end position="412"/>
    </location>
</feature>
<feature type="repeat" description="ARM 5">
    <location>
        <begin position="413"/>
        <end position="443"/>
    </location>
</feature>
<feature type="repeat" description="ARM 6">
    <location>
        <begin position="505"/>
        <end position="536"/>
    </location>
</feature>
<feature type="repeat" description="ARM 7">
    <location>
        <begin position="537"/>
        <end position="583"/>
    </location>
</feature>
<feature type="repeat" description="ARM 8">
    <location>
        <begin position="584"/>
        <end position="629"/>
    </location>
</feature>
<feature type="repeat" description="ARM 9">
    <location>
        <begin position="630"/>
        <end position="693"/>
    </location>
</feature>
<feature type="region of interest" description="Required for interaction with EIF4A1" evidence="2">
    <location>
        <begin position="1"/>
        <end position="287"/>
    </location>
</feature>
<feature type="region of interest" description="Required for binding to single stranded DNA" evidence="2">
    <location>
        <begin position="1"/>
        <end position="235"/>
    </location>
</feature>
<feature type="region of interest" description="Disordered" evidence="3">
    <location>
        <begin position="48"/>
        <end position="69"/>
    </location>
</feature>
<feature type="region of interest" description="Phosphorylation in this region is required for cytoplasmic localization and protein stabilization" evidence="2">
    <location>
        <begin position="54"/>
        <end position="69"/>
    </location>
</feature>
<feature type="region of interest" description="Phosphorylation in this region is required for cytoplasmic localization and protein stabilization" evidence="2">
    <location>
        <begin position="117"/>
        <end position="192"/>
    </location>
</feature>
<feature type="region of interest" description="Required for WNT-mediated nuclear localization" evidence="1">
    <location>
        <begin position="161"/>
        <end position="270"/>
    </location>
</feature>
<feature type="modified residue" description="Phosphoserine" evidence="1">
    <location>
        <position position="4"/>
    </location>
</feature>
<feature type="modified residue" description="Phosphoserine" evidence="2">
    <location>
        <position position="119"/>
    </location>
</feature>
<feature type="modified residue" description="Phosphoserine" evidence="1">
    <location>
        <position position="120"/>
    </location>
</feature>
<feature type="modified residue" description="Phosphoserine" evidence="1">
    <location>
        <position position="122"/>
    </location>
</feature>
<feature type="modified residue" description="Phosphoserine" evidence="1">
    <location>
        <position position="143"/>
    </location>
</feature>
<proteinExistence type="evidence at transcript level"/>
<reference key="1">
    <citation type="journal article" date="1994" name="Differentiation">
        <title>Cell type-specific desmosomal plaque proteins of the plakoglobin family: plakophilin 1 (band 6 protein).</title>
        <authorList>
            <person name="Heid H.W."/>
            <person name="Schmidt A."/>
            <person name="Zimbelmann R."/>
            <person name="Schaefer S."/>
            <person name="Winter-Simanowski S."/>
            <person name="Stumpp S."/>
            <person name="Keith M."/>
            <person name="Figge U."/>
            <person name="Schnolzer M."/>
            <person name="Franke W.W."/>
        </authorList>
    </citation>
    <scope>NUCLEOTIDE SEQUENCE [MRNA]</scope>
</reference>
<accession>Q28161</accession>
<gene>
    <name type="primary">PKP1</name>
</gene>
<keyword id="KW-0130">Cell adhesion</keyword>
<keyword id="KW-0965">Cell junction</keyword>
<keyword id="KW-1003">Cell membrane</keyword>
<keyword id="KW-0963">Cytoplasm</keyword>
<keyword id="KW-0238">DNA-binding</keyword>
<keyword id="KW-0472">Membrane</keyword>
<keyword id="KW-0539">Nucleus</keyword>
<keyword id="KW-0597">Phosphoprotein</keyword>
<keyword id="KW-1185">Reference proteome</keyword>
<keyword id="KW-0677">Repeat</keyword>
<keyword id="KW-0694">RNA-binding</keyword>
<organism>
    <name type="scientific">Bos taurus</name>
    <name type="common">Bovine</name>
    <dbReference type="NCBI Taxonomy" id="9913"/>
    <lineage>
        <taxon>Eukaryota</taxon>
        <taxon>Metazoa</taxon>
        <taxon>Chordata</taxon>
        <taxon>Craniata</taxon>
        <taxon>Vertebrata</taxon>
        <taxon>Euteleostomi</taxon>
        <taxon>Mammalia</taxon>
        <taxon>Eutheria</taxon>
        <taxon>Laurasiatheria</taxon>
        <taxon>Artiodactyla</taxon>
        <taxon>Ruminantia</taxon>
        <taxon>Pecora</taxon>
        <taxon>Bovidae</taxon>
        <taxon>Bovinae</taxon>
        <taxon>Bos</taxon>
    </lineage>
</organism>
<comment type="function">
    <text evidence="1 2">A component of desmosome cell-cell junctions which are required for positive regulation of cellular adhesion (By similarity). Plays a role in desmosome protein expression regulation and localization to the desmosomal plaque, thereby maintaining cell sheet integrity and anchorage of desmosomes to intermediate filaments (By similarity). Required for localization of DSG3 and YAP1 to the cell membrane in keratinocytes in response to mechanical strain, via the formation of an interaction complex composed of DSG3, YAP1, PKP1 and YWHAG (By similarity). Positively regulates differentiation of keratinocytes, potentially via promoting localization of DSG1 at desmosome cell junctions (By similarity). Required for calcium-independent development and maturation of desmosome plaques specifically at lateral cell-cell contacts in differentiating keratinocytes (By similarity). Plays a role in the maintenance of DSG3 protein abundance, DSG3 clustering and localization of these clusters to the cell membrane in keratinocytes (By similarity). May also promote keratinocyte proliferation and morphogenesis during postnatal development (By similarity). Required for tight junction inside-out transepidermal barrier function of the skin (By similarity). Promotes Wnt-mediated proliferation and differentiation of ameloblasts, via facilitating TJP1/ZO-1 localization to tight junctions (By similarity). Binds single-stranded DNA (ssDNA), and may thereby play a role in sensing DNA damage and promoting cell survival (By similarity). Positively regulates cap-dependent translation and as a result cell proliferation, via recruitment of EIF4A1 to the initiation complex and promotion of EIF4A1 ATPase activity (By similarity). Regulates the mRNA stability and protein abundance of desmosome components PKP2, PKP3, DSC2 and DSP, potentially via its interaction with FXR1 (By similarity). May facilitate the formation of intermediate filaments (By similarity).</text>
</comment>
<comment type="subunit">
    <text evidence="1 2">Part of a complex that contains DSG3, PKP1, YAP1 and YWHAG; the complex is required for localization of DSG3 and YAP1 to the cell membrane in keratinocytes (By similarity). Interacts (via N-terminus) with KRT5/CK5, KRT8/CK8 (via rod domain), KRT15/CK15 and KRT18/CK18 (via rod domain) as part of intermediate filaments (By similarity). Interacts with VIM (via rod domain) (By similarity). Interacts with DSP (By similarity). Interacts with DES (By similarity). Interacts with FXR1; the interaction may facilitate the binding of PKP1 to PKP2, PKP3 and DSP mRNA (By similarity). Interacts (via N-terminus) with EIF4A1; the interaction promotes EIF4A1 recruitment to the cap-dependent translation complex and EIF4A1 ATPase activity (By similarity). Interacts with TJP1/ZO-1; the interaction facilitates TJP1/ZO-1 localization to the plasma membrane (By similarity). Interacts (when phosphorylated) with YWHAG; the interaction results in translocation of PKP1 to the cytoplasm and loss of intercellular adhesion in keratinocytes (By similarity).</text>
</comment>
<comment type="subcellular location">
    <subcellularLocation>
        <location evidence="2">Nucleus</location>
    </subcellularLocation>
    <subcellularLocation>
        <location evidence="2">Cytoplasm</location>
        <location evidence="2">Perinuclear region</location>
    </subcellularLocation>
    <subcellularLocation>
        <location evidence="1">Cytoplasm</location>
    </subcellularLocation>
    <subcellularLocation>
        <location evidence="1">Cell junction</location>
        <location evidence="1">Desmosome</location>
    </subcellularLocation>
    <subcellularLocation>
        <location evidence="2">Cell membrane</location>
    </subcellularLocation>
    <subcellularLocation>
        <location evidence="2">Cytoplasm</location>
        <location evidence="2">Stress granule</location>
    </subcellularLocation>
    <text evidence="1 2">Colocalizes with EIF4A1 in stress granules following arsenate or hydrogen peroxide treatment (By similarity). Localizes to nucleoli following DNA damage (By similarity). Located in the cytoplasm during early tooth development, however localizes to the cell membrane in ameloblasts during molar growth (By similarity). Ca(2+)-mediated localization to the cell membrane in dental epithelial cells is inhibited via WNT3A (By similarity). Initially localized to the cytoplasm however as keratinocyte differentiation proceeds becomes localized to cell junctions as early cell-cell contacts become linear as part of membrane sealing (By similarity). Localized to lateral cell contacts in colocalization with DSP as epithelial sheet formation completes (By similarity). Localizes to the cytoplasm when the phosphorylated form interacts with YWHAG (By similarity). Protein stability is increased and localizes to the cytoplasm when phosphorylated at the N-terminus by AKT2 (By similarity). The unphosphorylated form is preferentially localized to desmosomes (By similarity).</text>
</comment>
<comment type="PTM">
    <text evidence="1 2">Phosphorylated by AKT2; required for interaction with YWHAG and subsequent localization away from desmosomes to the cytoplasm (By similarity). Phosphorylation of Ser-119 by AKT2 promotes PKP1-driven cap-dependent mRNA translation and decreases intercellular adhesion, phosphorylation is promoted by insulin (By similarity). Phosphorylation by RIPK4 at the N-terminus is required for its role in differentiation of keratinocytes and DSG1 localization at cell junctions (By similarity).</text>
</comment>
<comment type="similarity">
    <text evidence="4">Belongs to the beta-catenin family.</text>
</comment>